<sequence>WASQVSENRPVCKAIIQGKQFEGLVDTGADVSIIALNQWPKNWPKQKAVTGLVGVGTASEVYQSTEILHCLGPDNQESTVQPMITSIPLNLWGRDLLQQWGAEITMPAPLYSPTSQKIMTKMGYIPGKGLGKNEDGIKIPVEAKINQKREGIGYPF</sequence>
<feature type="chain" id="PRO_0000199547" description="Endogenous retrovirus group K member 25 Pro protein">
    <location>
        <begin position="1"/>
        <end position="156"/>
    </location>
</feature>
<feature type="domain" description="Peptidase A2" evidence="3">
    <location>
        <begin position="21"/>
        <end position="96"/>
    </location>
</feature>
<feature type="domain" description="G-patch" evidence="2">
    <location>
        <begin position="111"/>
        <end position="156"/>
    </location>
</feature>
<feature type="active site" evidence="4">
    <location>
        <position position="26"/>
    </location>
</feature>
<organism>
    <name type="scientific">Homo sapiens</name>
    <name type="common">Human</name>
    <dbReference type="NCBI Taxonomy" id="9606"/>
    <lineage>
        <taxon>Eukaryota</taxon>
        <taxon>Metazoa</taxon>
        <taxon>Chordata</taxon>
        <taxon>Craniata</taxon>
        <taxon>Vertebrata</taxon>
        <taxon>Euteleostomi</taxon>
        <taxon>Mammalia</taxon>
        <taxon>Eutheria</taxon>
        <taxon>Euarchontoglires</taxon>
        <taxon>Primates</taxon>
        <taxon>Haplorrhini</taxon>
        <taxon>Catarrhini</taxon>
        <taxon>Hominidae</taxon>
        <taxon>Homo</taxon>
    </lineage>
</organism>
<keyword id="KW-0064">Aspartyl protease</keyword>
<keyword id="KW-0068">Autocatalytic cleavage</keyword>
<keyword id="KW-0895">ERV</keyword>
<keyword id="KW-0378">Hydrolase</keyword>
<keyword id="KW-0645">Protease</keyword>
<keyword id="KW-1185">Reference proteome</keyword>
<keyword id="KW-0688">Ribosomal frameshifting</keyword>
<keyword id="KW-0814">Transposable element</keyword>
<dbReference type="EC" id="3.4.23.50"/>
<dbReference type="EMBL" id="AP000776">
    <property type="status" value="NOT_ANNOTATED_CDS"/>
    <property type="molecule type" value="Genomic_DNA"/>
</dbReference>
<dbReference type="SMR" id="P63125"/>
<dbReference type="iPTMnet" id="P63125"/>
<dbReference type="PhosphoSitePlus" id="P63125"/>
<dbReference type="BioMuta" id="HGNC:39039"/>
<dbReference type="DMDM" id="52000856"/>
<dbReference type="GeneCards" id="ERVK-25"/>
<dbReference type="HGNC" id="HGNC:39039">
    <property type="gene designation" value="ERVK-25"/>
</dbReference>
<dbReference type="neXtProt" id="NX_P63125"/>
<dbReference type="PhylomeDB" id="P63125"/>
<dbReference type="Pharos" id="P63125">
    <property type="development level" value="Tdark"/>
</dbReference>
<dbReference type="Proteomes" id="UP000005640">
    <property type="component" value="Unplaced"/>
</dbReference>
<dbReference type="GO" id="GO:0004190">
    <property type="term" value="F:aspartic-type endopeptidase activity"/>
    <property type="evidence" value="ECO:0007669"/>
    <property type="project" value="UniProtKB-KW"/>
</dbReference>
<dbReference type="GO" id="GO:0003676">
    <property type="term" value="F:nucleic acid binding"/>
    <property type="evidence" value="ECO:0007669"/>
    <property type="project" value="InterPro"/>
</dbReference>
<dbReference type="GO" id="GO:0006508">
    <property type="term" value="P:proteolysis"/>
    <property type="evidence" value="ECO:0007669"/>
    <property type="project" value="UniProtKB-KW"/>
</dbReference>
<dbReference type="GO" id="GO:0075523">
    <property type="term" value="P:viral translational frameshifting"/>
    <property type="evidence" value="ECO:0007669"/>
    <property type="project" value="UniProtKB-KW"/>
</dbReference>
<dbReference type="CDD" id="cd05482">
    <property type="entry name" value="HIV_retropepsin_like"/>
    <property type="match status" value="1"/>
</dbReference>
<dbReference type="Gene3D" id="2.40.70.10">
    <property type="entry name" value="Acid Proteases"/>
    <property type="match status" value="1"/>
</dbReference>
<dbReference type="InterPro" id="IPR001969">
    <property type="entry name" value="Aspartic_peptidase_AS"/>
</dbReference>
<dbReference type="InterPro" id="IPR000467">
    <property type="entry name" value="G_patch_dom"/>
</dbReference>
<dbReference type="InterPro" id="IPR051592">
    <property type="entry name" value="HERV-K_Pro_peptidase_A2"/>
</dbReference>
<dbReference type="InterPro" id="IPR001995">
    <property type="entry name" value="Peptidase_A2_cat"/>
</dbReference>
<dbReference type="InterPro" id="IPR021109">
    <property type="entry name" value="Peptidase_aspartic_dom_sf"/>
</dbReference>
<dbReference type="InterPro" id="IPR034170">
    <property type="entry name" value="Retropepsin-like_cat_dom"/>
</dbReference>
<dbReference type="InterPro" id="IPR018061">
    <property type="entry name" value="Retropepsins"/>
</dbReference>
<dbReference type="PANTHER" id="PTHR19422">
    <property type="entry name" value="GAG RETROVIRAL POLYPROTEIN"/>
    <property type="match status" value="1"/>
</dbReference>
<dbReference type="PANTHER" id="PTHR19422:SF123">
    <property type="entry name" value="RT1 CLASS I, LOCUS CE15"/>
    <property type="match status" value="1"/>
</dbReference>
<dbReference type="Pfam" id="PF01585">
    <property type="entry name" value="G-patch"/>
    <property type="match status" value="1"/>
</dbReference>
<dbReference type="Pfam" id="PF00077">
    <property type="entry name" value="RVP"/>
    <property type="match status" value="1"/>
</dbReference>
<dbReference type="SMART" id="SM00443">
    <property type="entry name" value="G_patch"/>
    <property type="match status" value="1"/>
</dbReference>
<dbReference type="SUPFAM" id="SSF50630">
    <property type="entry name" value="Acid proteases"/>
    <property type="match status" value="1"/>
</dbReference>
<dbReference type="PROSITE" id="PS50175">
    <property type="entry name" value="ASP_PROT_RETROV"/>
    <property type="match status" value="1"/>
</dbReference>
<dbReference type="PROSITE" id="PS00141">
    <property type="entry name" value="ASP_PROTEASE"/>
    <property type="match status" value="1"/>
</dbReference>
<dbReference type="PROSITE" id="PS50174">
    <property type="entry name" value="G_PATCH"/>
    <property type="match status" value="1"/>
</dbReference>
<accession>P63125</accession>
<evidence type="ECO:0000250" key="1"/>
<evidence type="ECO:0000255" key="2">
    <source>
        <dbReference type="PROSITE-ProRule" id="PRU00092"/>
    </source>
</evidence>
<evidence type="ECO:0000255" key="3">
    <source>
        <dbReference type="PROSITE-ProRule" id="PRU00275"/>
    </source>
</evidence>
<evidence type="ECO:0000255" key="4">
    <source>
        <dbReference type="PROSITE-ProRule" id="PRU10094"/>
    </source>
</evidence>
<evidence type="ECO:0000305" key="5"/>
<name>VPK25_HUMAN</name>
<comment type="function">
    <text>Retroviral proteases have roles in processing of the primary translation products and the maturation of the viral particle. Endogenous Pro proteins may have kept, lost or modified their original function during evolution. This endogenous protein has retained most of the characteristics of retroviral proteases.</text>
</comment>
<comment type="catalytic activity">
    <reaction>
        <text>Processing at the authentic HIV-1 PR recognition site and release of the mature p17 matrix and the p24 capsid protein, as a result of the cleavage of the -SQNY-|-PIVQ- cleavage site.</text>
        <dbReference type="EC" id="3.4.23.50"/>
    </reaction>
</comment>
<comment type="subunit">
    <text evidence="1">Active as a homodimer.</text>
</comment>
<comment type="alternative products">
    <event type="ribosomal frameshifting"/>
    <isoform>
        <id>P63125-1</id>
        <name>1</name>
        <sequence type="displayed"/>
    </isoform>
    <text>This protein is synthesized as Gag-Pro and Gag-Pro-Pol polyprotein. These polyproteins are thought, by similarity with type-B retroviruses, to be generated by -1 frameshifts occurring at the Gag-Pro and Pro-Pol genes boundaries.</text>
</comment>
<comment type="PTM">
    <text evidence="1">Autoproteolytically processed at the N-terminus. Expected C-terminal autoprocessing not detected. The sequence shown is that of the processed Pro protein (By similarity).</text>
</comment>
<comment type="similarity">
    <text evidence="5">Belongs to the peptidase A2 family. HERV class-II K(HML-2) subfamily.</text>
</comment>
<protein>
    <recommendedName>
        <fullName>Endogenous retrovirus group K member 25 Pro protein</fullName>
    </recommendedName>
    <alternativeName>
        <fullName>HERV-K_11q22.1 provirus ancestral Pro protein</fullName>
        <ecNumber>3.4.23.50</ecNumber>
    </alternativeName>
    <alternativeName>
        <fullName>Protease</fullName>
    </alternativeName>
    <alternativeName>
        <fullName>Proteinase</fullName>
        <shortName>PR</shortName>
    </alternativeName>
</protein>
<gene>
    <name type="primary">ERVK-25</name>
</gene>
<reference key="1">
    <citation type="submission" date="1999-11" db="EMBL/GenBank/DDBJ databases">
        <authorList>
            <person name="Hattori M."/>
            <person name="Ishii K."/>
            <person name="Toyoda A."/>
            <person name="Taylor T.D."/>
            <person name="Hong-Seog P."/>
            <person name="Fujiyama A."/>
            <person name="Yada T."/>
            <person name="Totoki Y."/>
            <person name="Watanabe H."/>
            <person name="Sakaki Y."/>
        </authorList>
    </citation>
    <scope>NUCLEOTIDE SEQUENCE [GENOMIC DNA]</scope>
</reference>
<proteinExistence type="inferred from homology"/>